<proteinExistence type="inferred from homology"/>
<name>RS19_METHJ</name>
<reference key="1">
    <citation type="journal article" date="2016" name="Stand. Genomic Sci.">
        <title>Complete genome sequence of Methanospirillum hungatei type strain JF1.</title>
        <authorList>
            <person name="Gunsalus R.P."/>
            <person name="Cook L.E."/>
            <person name="Crable B."/>
            <person name="Rohlin L."/>
            <person name="McDonald E."/>
            <person name="Mouttaki H."/>
            <person name="Sieber J.R."/>
            <person name="Poweleit N."/>
            <person name="Zhou H."/>
            <person name="Lapidus A.L."/>
            <person name="Daligault H.E."/>
            <person name="Land M."/>
            <person name="Gilna P."/>
            <person name="Ivanova N."/>
            <person name="Kyrpides N."/>
            <person name="Culley D.E."/>
            <person name="McInerney M.J."/>
        </authorList>
    </citation>
    <scope>NUCLEOTIDE SEQUENCE [LARGE SCALE GENOMIC DNA]</scope>
    <source>
        <strain>ATCC 27890 / DSM 864 / NBRC 100397 / JF-1</strain>
    </source>
</reference>
<accession>Q2FT35</accession>
<gene>
    <name evidence="1" type="primary">rps19</name>
    <name type="ordered locus">Mhun_2249</name>
</gene>
<keyword id="KW-1185">Reference proteome</keyword>
<keyword id="KW-0687">Ribonucleoprotein</keyword>
<keyword id="KW-0689">Ribosomal protein</keyword>
<keyword id="KW-0694">RNA-binding</keyword>
<keyword id="KW-0699">rRNA-binding</keyword>
<comment type="function">
    <text evidence="1">Protein S19 forms a complex with S13 that binds strongly to the 16S ribosomal RNA.</text>
</comment>
<comment type="similarity">
    <text evidence="1">Belongs to the universal ribosomal protein uS19 family.</text>
</comment>
<sequence length="137" mass="15994">MAKKVQKKLPRRKEEFTYHGYKIDELRAMSLEDLLPVMPSRARRKVLRGWTIGEEKLLSDIRSNGSRIRTHQRDMIILPEMIGREIEIYNGKEFIRVELQPESVFHYLGEFALTRRRVTHGSAGIGATRSSKFVPLK</sequence>
<protein>
    <recommendedName>
        <fullName evidence="1">Small ribosomal subunit protein uS19</fullName>
    </recommendedName>
    <alternativeName>
        <fullName evidence="2">30S ribosomal protein S19</fullName>
    </alternativeName>
</protein>
<organism>
    <name type="scientific">Methanospirillum hungatei JF-1 (strain ATCC 27890 / DSM 864 / NBRC 100397 / JF-1)</name>
    <dbReference type="NCBI Taxonomy" id="323259"/>
    <lineage>
        <taxon>Archaea</taxon>
        <taxon>Methanobacteriati</taxon>
        <taxon>Methanobacteriota</taxon>
        <taxon>Stenosarchaea group</taxon>
        <taxon>Methanomicrobia</taxon>
        <taxon>Methanomicrobiales</taxon>
        <taxon>Methanospirillaceae</taxon>
        <taxon>Methanospirillum</taxon>
    </lineage>
</organism>
<feature type="chain" id="PRO_0000354321" description="Small ribosomal subunit protein uS19">
    <location>
        <begin position="1"/>
        <end position="137"/>
    </location>
</feature>
<evidence type="ECO:0000255" key="1">
    <source>
        <dbReference type="HAMAP-Rule" id="MF_00531"/>
    </source>
</evidence>
<evidence type="ECO:0000305" key="2"/>
<dbReference type="EMBL" id="CP000254">
    <property type="protein sequence ID" value="ABD41954.1"/>
    <property type="molecule type" value="Genomic_DNA"/>
</dbReference>
<dbReference type="RefSeq" id="WP_011449212.1">
    <property type="nucleotide sequence ID" value="NC_007796.1"/>
</dbReference>
<dbReference type="SMR" id="Q2FT35"/>
<dbReference type="FunCoup" id="Q2FT35">
    <property type="interactions" value="132"/>
</dbReference>
<dbReference type="STRING" id="323259.Mhun_2249"/>
<dbReference type="EnsemblBacteria" id="ABD41954">
    <property type="protein sequence ID" value="ABD41954"/>
    <property type="gene ID" value="Mhun_2249"/>
</dbReference>
<dbReference type="GeneID" id="3923951"/>
<dbReference type="KEGG" id="mhu:Mhun_2249"/>
<dbReference type="eggNOG" id="arCOG04099">
    <property type="taxonomic scope" value="Archaea"/>
</dbReference>
<dbReference type="HOGENOM" id="CLU_097347_1_0_2"/>
<dbReference type="InParanoid" id="Q2FT35"/>
<dbReference type="OrthoDB" id="30559at2157"/>
<dbReference type="Proteomes" id="UP000001941">
    <property type="component" value="Chromosome"/>
</dbReference>
<dbReference type="GO" id="GO:0022627">
    <property type="term" value="C:cytosolic small ribosomal subunit"/>
    <property type="evidence" value="ECO:0007669"/>
    <property type="project" value="TreeGrafter"/>
</dbReference>
<dbReference type="GO" id="GO:0019843">
    <property type="term" value="F:rRNA binding"/>
    <property type="evidence" value="ECO:0007669"/>
    <property type="project" value="UniProtKB-UniRule"/>
</dbReference>
<dbReference type="GO" id="GO:0003735">
    <property type="term" value="F:structural constituent of ribosome"/>
    <property type="evidence" value="ECO:0007669"/>
    <property type="project" value="InterPro"/>
</dbReference>
<dbReference type="GO" id="GO:0000028">
    <property type="term" value="P:ribosomal small subunit assembly"/>
    <property type="evidence" value="ECO:0007669"/>
    <property type="project" value="TreeGrafter"/>
</dbReference>
<dbReference type="GO" id="GO:0006412">
    <property type="term" value="P:translation"/>
    <property type="evidence" value="ECO:0007669"/>
    <property type="project" value="UniProtKB-UniRule"/>
</dbReference>
<dbReference type="Gene3D" id="3.30.860.10">
    <property type="entry name" value="30s Ribosomal Protein S19, Chain A"/>
    <property type="match status" value="1"/>
</dbReference>
<dbReference type="HAMAP" id="MF_00531">
    <property type="entry name" value="Ribosomal_uS19"/>
    <property type="match status" value="1"/>
</dbReference>
<dbReference type="InterPro" id="IPR002222">
    <property type="entry name" value="Ribosomal_uS19"/>
</dbReference>
<dbReference type="InterPro" id="IPR005713">
    <property type="entry name" value="Ribosomal_uS19_euk/arc"/>
</dbReference>
<dbReference type="InterPro" id="IPR023575">
    <property type="entry name" value="Ribosomal_uS19_SF"/>
</dbReference>
<dbReference type="NCBIfam" id="NF003121">
    <property type="entry name" value="PRK04038.1"/>
    <property type="match status" value="1"/>
</dbReference>
<dbReference type="NCBIfam" id="TIGR01025">
    <property type="entry name" value="uS19_arch"/>
    <property type="match status" value="1"/>
</dbReference>
<dbReference type="PANTHER" id="PTHR11880">
    <property type="entry name" value="RIBOSOMAL PROTEIN S19P FAMILY MEMBER"/>
    <property type="match status" value="1"/>
</dbReference>
<dbReference type="PANTHER" id="PTHR11880:SF2">
    <property type="entry name" value="SMALL RIBOSOMAL SUBUNIT PROTEIN US19"/>
    <property type="match status" value="1"/>
</dbReference>
<dbReference type="Pfam" id="PF00203">
    <property type="entry name" value="Ribosomal_S19"/>
    <property type="match status" value="1"/>
</dbReference>
<dbReference type="PIRSF" id="PIRSF002144">
    <property type="entry name" value="Ribosomal_S19"/>
    <property type="match status" value="1"/>
</dbReference>
<dbReference type="PRINTS" id="PR00975">
    <property type="entry name" value="RIBOSOMALS19"/>
</dbReference>
<dbReference type="SUPFAM" id="SSF54570">
    <property type="entry name" value="Ribosomal protein S19"/>
    <property type="match status" value="1"/>
</dbReference>